<comment type="function">
    <text evidence="6 7 8 9">Hybrid PKS-NRPS synthetase; part of the gene cluster that mediates the biosynthesis of the fungal neurotoxin cyclopiazonic acid (CPA), a nanomolar inhibitor of Ca(2+)-ATPase with a unique pentacyclic indole tetramic acid scaffold (PubMed:18854220, PubMed:19663400, PubMed:21608094). The hybrid two module polyketide synthase-nonribosomal peptide synthetase (PKS-NRPS) cpaS incorporates acetyl-CoA, malonyl-CoA, and tryptophan (Trp) and utilizes a C-terminal redox-incompetent reductase domain to make and release the tryptophan tetramic acid, cyclo-acetoacetyl-L-tryptophan (c-AATrp), as the first intermediate in the pathway. CpaS catalyzes a Dieckmann-type cyclization on the N-acetoacetyl-Trp intermediate bound in thioester linkage to the phosphopantetheinyl arm of the T domain to form and release c-AATrp (PubMed:18854220, PubMed:19663400, PubMed:21608094). CpaD then regiospecifically dimethylallylates c-AATrp to form beta-cyclopiazonic acid. CpaD discriminates against free Trp but accepts tryptophan-containing thiohydantoins, diketopiperazines, and linear peptides as substrates for C4-prenylation and also acts as regiospecific O-dimethylallyltransferase (DMAT) on a tyrosine-derived tetramic acid (PubMed:19877600). The beta-cyclopiazonate dehydrogenase cpaO then carries out the dehydrogenation of beta-CPA to yield an unstable enimine product, which is captured by intramolecular cyclization to create the pentacyclic fused scaffold of alpha-cyclopiazonate (PubMed:21608094). Finally, the cytochrome P450 monooxygenase cpaH mediates the conversion of CPA into the less toxic 2-oxocyclopiazonic acid, the end product of the CPA pathway in A.oryza (PubMed:21608094).</text>
</comment>
<comment type="catalytic activity">
    <reaction evidence="7">
        <text>L-tryptophan + malonyl-CoA + acetyl-CoA = cyclo-acetoacetyl-L-tryptophan + CO2 + 2 CoA + H2O</text>
        <dbReference type="Rhea" id="RHEA:66900"/>
        <dbReference type="ChEBI" id="CHEBI:15377"/>
        <dbReference type="ChEBI" id="CHEBI:16526"/>
        <dbReference type="ChEBI" id="CHEBI:57287"/>
        <dbReference type="ChEBI" id="CHEBI:57288"/>
        <dbReference type="ChEBI" id="CHEBI:57384"/>
        <dbReference type="ChEBI" id="CHEBI:57912"/>
        <dbReference type="ChEBI" id="CHEBI:167552"/>
    </reaction>
    <physiologicalReaction direction="left-to-right" evidence="7">
        <dbReference type="Rhea" id="RHEA:66901"/>
    </physiologicalReaction>
</comment>
<comment type="pathway">
    <text evidence="6 7 9">Secondary metabolite biosynthesis.</text>
</comment>
<comment type="domain">
    <text evidence="13">NRP synthetases are composed of discrete domains (adenylation (A), thiolation (T) or peptidyl carrier protein (PCP) and condensation (C) domains) which when grouped together are referred to as a single module. Each module is responsible for the recognition (via the A domain) and incorporation of a single amino acid into the growing peptide product. Thus, an NRP synthetase is generally composed of one or more modules and can terminate in a thioesterase domain (TE) that releases the newly synthesized peptide from the enzyme. Occasionally, epimerase (E) domains (responsible for L- to D- amino acid conversion) are present within the NRP synthetase. CpaA also contains a polyketide synthase module (PKS) consisting of several catalytic domains including a ketoacyl synthase domain (KS), an acyl transferase domain (AT), a dehydratase domain (DH), a methyltransferase domain (MT), and a ketoreductase domain (KR). Instead of a thioesterase domain (TE), CpaA finishes with a reductase-like domain (RED) for peptide release. CpaA has the following architecture: KS-AT-DH-KR-PCP-C-A-T-RED.</text>
</comment>
<comment type="disruption phenotype">
    <text evidence="6 9">Impairs the production of cyclopiazonic acid and of its biosynthetic intermediates cyclo-acetoacetyl-L-tryptophan and beta-cyclopiazonic acid.</text>
</comment>
<comment type="similarity">
    <text evidence="12">In the C-terminal section; belongs to the NRP synthetase family.</text>
</comment>
<protein>
    <recommendedName>
        <fullName evidence="11">Cyclo-acetoacetyl-L-tryptophan synthase</fullName>
        <ecNumber evidence="7">2.3.1.-</ecNumber>
    </recommendedName>
    <alternativeName>
        <fullName evidence="10">Cyclopiazonic acid biosynthesis cluster protein A</fullName>
    </alternativeName>
    <alternativeName>
        <fullName>Polyketide synthase-nonribosomal peptide synthetase cpaA</fullName>
        <shortName evidence="10">PKS-NRPS cpaA</shortName>
    </alternativeName>
</protein>
<gene>
    <name evidence="10" type="primary">cpaA</name>
    <name evidence="11" type="synonym">cpaS</name>
</gene>
<sequence length="3907" mass="430405">MKTPIAVVGTACRFPGDISSPSQLWELLSNPKDVLRDLNPKRLNLTGFNHHNAEHHGATNVPNKSYILDDDVYRFDAAFFNISAAEAEAMDPQQRLLLETTYEALESAGYTLKQMRGSSTSVFIGAMTSDYHDIQARDLDTISRWHATGTSPSILSNRISYFFDLKGPSMTVNTACSSSLVALHQAVQSLRNGDCTAAIVGGVNLLLDPEVYISHSNLHMLSPTSRCRMWDRDADGYARGEGCTSIMIKTLDQALKDGDDVECIIRETAVNSDGRSAGITMPSPEAQATLIRETYERSGLDPVRDRCQYFECHGTGTQAGDPVEAQAIQQTFYPKNAVFSPDDKLYVGSIKTLIGHLEGCAGLAGVMKAIMCLKNRTITPNMFFDNLNPNISPFYDHLRIPTNTVPWPPVAHGCPLRASVNSFGFGGTNAHAIIESYVPSQPKRQASYCKESNRQKYTNSGPFVFSAHTQESLYSNIERTARYVRSNEALDLGHLAWTLAKRTVLPFKVAITALSREELLGNIDKAIVEYKASKASAQGPSPWKHPPEPHRIMGIFTGQGAQWAGMGRELLLASTVFRKSIERCEHALATLHDGPSWSLQEELLADKPSSRLSNPAISQPVTTAIEIAAYDLLCTSGVNVDVVVGHSSGEIVAAYALSIISAEDAMKIAYYRGLHTKPARSGRMLAVSLSFHDARELCSWPSFSGRVVVAASNGPASTTLSGDYDAILEVKALLDRKKTFARTLQVDVAYHSHHMVPCSAAYLESLRACNIQVKSPRSGCTWISSVTGRNAILDGDIQSFSATYWVDNMVKPVLFSQALDKSLCGTQDLGVCIEFGPHPALRGPVLDTLKSKGTSSVHYTSLLRRGQNDLNAASSAVGYLWERMADRVDLASFLQGFRSQALQLIKGLPGYSWDHGRRYWRESRISRRYRLEGTQLHPLLGRRSADEFPNEFCWKNMLHLKEMPWAQGYKEEGRVVLSAAFYLCSLLSAASSAAVCQRLVVLELNNFVVMEPITLEEYGNGVEYITTIRFDNEDFRTISSTILHAEASCHACKSDESVLTKVCTARLTLHLGDARGPDCDCLPPRGQRNDLLAPVDVADLYDSFEQAGMSYTGPFRSITSIQRSLGEATASVAWAVDTTMPESVLNPAMVEASFQAIMCAFASPLTEELRTPFHAKEIRRVLVTPRLALGGVSCDIDAFVTGVDCGGVEGDVSLYKPDGNAMIQIEGLVMKSVPQPDTSSDRNLFSHVVWESDPFGYSLISYPTPNEDMGWKRAADIVALYHLRRTVEEIDPLESAGFTPHHQLLYREISHIAAAGRGSEYYITHPDCAQTSEEIILAMIDKYAGIVDLQSLHSFGKALPAILRGELDLHNTPNEPDTLEGFTHDAAMFSQLSKDICSIVRRIVHKHPHMNVLGLDPGPSVITHQILEALDDKHTSYCLGSADPVILNKTLARLSAQHRNLYSKVIDLTTVNAGEHGSDKYDMVIAANPLHGTDTSANLFEVCRAMLKPGGYLVFVRVTGRVSMSLLCTCGWLPQWWQGYDQDARSWTDMSTVRYDSHLRSKGFSGIDHIFHDSMNSNGDGLSVMVTQAVNDTVMMLREPMNSTGLAPLTETVVFVGGKTLSVARLLQSIRRIVAASGTATTVVEDIDRLEMNGLTKQHSIISLVELDEPFFSRGAFHERLLAFKELVARSKHVLWLTTRNMTSISVAIGRAMRSERGADISLQFLGLSTVANISPSAVVEVFLRLTWSFVPVLTDGEVLWTNEPELQWDGSTLRIPRLVWDHKRNKRYNYRHRQGRPEAGLPQTAVPLSPRVSTNSVAVQIKYSCLVCTDVYLWVGARIDGQGNVVGISDHVSFVIHARLDHVHNLSDEHDLSPDALRATASFTLAYLLIKSLSGPILLYEPDELLAAAVEQDREPEQTVYFVTSKYNDCSRGWITVHPHASRRMVERMLPRKVSAFVDLSSSDDHVVTTLRDIYSHARIQAVELYRRAFAASPGQLIADSYTQACTSLSILSHTALEVTSSTEASTNIASVAYPKVVNWTSPAPIASPGDMISATTMFSSSGTYFMIDMATPLGLSILKWMATNGARKFVLAGRNPRMHEAWLEEMSRLGATVKPLKMDVSNKESILSAFTQIKEALPPIVGVCYAPLALSDQGFEYTVEDAGGLAATAMINAAKYLDELFPTPTLDFFVILTSLVSVIGTPKQVAYHAPSLFMTDLIQRRRLRGLVGSVMALGMVVDAGYFSRQGKEVIQRMMHHGYAPLSESDLHHAFGEVVAAGVPEAEGNAEIFFGLQLIDSQIDQSRESTSVSNHLLSHFITSRSGTKEGQYAEQEDSPSLLVPDEQLQESGPGRNKYDDLLARLSGKVRSILRLGDQALDVHTPLLDLGCDSLLAVDIQAWVAKEFDIDITPMDALLDTVAGLCEKAVPKPNAPGFVVEKEEQLVKELDFIDVATTASRSEHSSSVQDIPLDSTSSESSCVLCPSDSGFEQVRNDLEPRFTRIEKMSPHQSQIWFAGHWMRDPTQYNVVISYNVEGRFPVDRFKEALEHAVSMHESLRTAFFSDPNNGDLLQGVLKVPPPFLEHVRTPSAASVSQEFDKLASYQWRLEDGEVMRVTVVSIGKDQHTVIFGYHHIVMDGASWSTFLHDLKCIYEQRPRREVAQYVDYSLMLNRDIHNGTFAKELEFWKSELLPPPEMMPVLPLAKEKTRIPTDNFKVHTSTRHISIEATERIKQASRSLRGTPFHFYLATLQVFLAGLLKIESLCIGMSDANRKHQQFTGTVGYFLNMLPLRFEVQQTDSFANVFQKTSSKVLTALLNSSIPSNLVVDALNIPRVSNVTPLFQVAINYRVGEITRMSVDDFALNYDRSVMGNAPYDISFHVTPCANGTSIVEVNCRDYLYSPKATERIIDEYVRLLEIMSSNPLISVQSSVATSAPINEDGLSVQRGPRISHGWPATLPERFQDMVDQYGDRIAITDQGRDFSYLQLQAQSTRIGEALLQKGVRSGDTVAVLCPPSMNSVASMLAILRISAVYVPLDLSLPAARHKAMILASPVRALVCVSSTVEKVLELGVSTILNLSEIPDIRAPSTRFTNSAKGDSLAILLYTSGSTGQPKGVCLPQSGFINYLAAKRKELGLDSSTVVLQQSSLGFDMGLAQTLNAIMNGGKLVIVPQELRGDSIEIARIIRDQKVTFTLATPSEYLVMLQHGREYLHNYAGWRHACLGGEPFTDQLKREFVRLGKNCPVVQDSYGVTEISACTTFETMTASQLEEARSVGRTIPNTSLYIVDADCNLVATGEPGEICISGAGVALGYLNEEQTRLKFVQDPFALPDDIARGWTRVYRTGDKAKLLDDGSLILLGRMDGNTEVKVRGLRIDLEDVASTMVNCHPDLLSSAIVCVKGQGVSETLVAFVAMMPGQTASDVELQHLACNLPLPQYMRPSTVICLDELPRNANGKIDRKRIDAMPWTAPTTLSQSSKRLTLGEGELKLLWQVLLPGKHIQPESDFFLLGGNSTLLVRLQGAIRTSIGVSLTLREMYGASTLAQMALKVDARKAESPSMTINWLAETAIPQHILDRASSTSNLNLPKHCQGSGCQILLTGSTSFLGRVLVQLLLQVPEVERVHCIAVEKEQEHVPPTSDKVSLYYGSLLDPNLGLSTAEWASLQDRVDVVIHNGSNGHCLNTYNSLKGPNLGSTHRLAEFALQSQVPLHYISSGRVILQSGQTALGPTSVSFHPPPLDGSDGLTATKWAGEVFLERLAEHTDISISIHRPCTPIGDQAPAQDALNSLLRYSVNLGATPRLTRMEGYLDFQKVEIIAEEIATLVTSRFTKRSNTSSFTTRGVSFFHHSSNIKVPVKSFKEYMEKVHGRPFQELNLREWSSLALEQGIEPLIPSFLEAVDDNEETLRYPYLGN</sequence>
<organism>
    <name type="scientific">Aspergillus oryzae</name>
    <name type="common">Yellow koji mold</name>
    <dbReference type="NCBI Taxonomy" id="5062"/>
    <lineage>
        <taxon>Eukaryota</taxon>
        <taxon>Fungi</taxon>
        <taxon>Dikarya</taxon>
        <taxon>Ascomycota</taxon>
        <taxon>Pezizomycotina</taxon>
        <taxon>Eurotiomycetes</taxon>
        <taxon>Eurotiomycetidae</taxon>
        <taxon>Eurotiales</taxon>
        <taxon>Aspergillaceae</taxon>
        <taxon>Aspergillus</taxon>
        <taxon>Aspergillus subgen. Circumdati</taxon>
    </lineage>
</organism>
<dbReference type="EC" id="2.3.1.-" evidence="7"/>
<dbReference type="EMBL" id="AB457185">
    <property type="protein sequence ID" value="BAG82673.1"/>
    <property type="molecule type" value="Genomic_DNA"/>
</dbReference>
<dbReference type="EMBL" id="AB506492">
    <property type="protein sequence ID" value="BAK26562.1"/>
    <property type="molecule type" value="Genomic_DNA"/>
</dbReference>
<dbReference type="SMR" id="B6F209"/>
<dbReference type="VEuPathDB" id="FungiDB:AO090001000277"/>
<dbReference type="BioCyc" id="MetaCyc:MONOMER-18879"/>
<dbReference type="GO" id="GO:0004315">
    <property type="term" value="F:3-oxoacyl-[acyl-carrier-protein] synthase activity"/>
    <property type="evidence" value="ECO:0007669"/>
    <property type="project" value="InterPro"/>
</dbReference>
<dbReference type="GO" id="GO:0004312">
    <property type="term" value="F:fatty acid synthase activity"/>
    <property type="evidence" value="ECO:0007669"/>
    <property type="project" value="TreeGrafter"/>
</dbReference>
<dbReference type="GO" id="GO:0016853">
    <property type="term" value="F:isomerase activity"/>
    <property type="evidence" value="ECO:0007669"/>
    <property type="project" value="UniProtKB-KW"/>
</dbReference>
<dbReference type="GO" id="GO:0016874">
    <property type="term" value="F:ligase activity"/>
    <property type="evidence" value="ECO:0007669"/>
    <property type="project" value="UniProtKB-KW"/>
</dbReference>
<dbReference type="GO" id="GO:0008168">
    <property type="term" value="F:methyltransferase activity"/>
    <property type="evidence" value="ECO:0007669"/>
    <property type="project" value="UniProtKB-KW"/>
</dbReference>
<dbReference type="GO" id="GO:0016491">
    <property type="term" value="F:oxidoreductase activity"/>
    <property type="evidence" value="ECO:0007669"/>
    <property type="project" value="UniProtKB-KW"/>
</dbReference>
<dbReference type="GO" id="GO:0031177">
    <property type="term" value="F:phosphopantetheine binding"/>
    <property type="evidence" value="ECO:0007669"/>
    <property type="project" value="InterPro"/>
</dbReference>
<dbReference type="GO" id="GO:0006633">
    <property type="term" value="P:fatty acid biosynthetic process"/>
    <property type="evidence" value="ECO:0007669"/>
    <property type="project" value="InterPro"/>
</dbReference>
<dbReference type="GO" id="GO:0032259">
    <property type="term" value="P:methylation"/>
    <property type="evidence" value="ECO:0007669"/>
    <property type="project" value="UniProtKB-KW"/>
</dbReference>
<dbReference type="GO" id="GO:0044550">
    <property type="term" value="P:secondary metabolite biosynthetic process"/>
    <property type="evidence" value="ECO:0007669"/>
    <property type="project" value="UniProtKB-ARBA"/>
</dbReference>
<dbReference type="CDD" id="cd05930">
    <property type="entry name" value="A_NRPS"/>
    <property type="match status" value="1"/>
</dbReference>
<dbReference type="CDD" id="cd19532">
    <property type="entry name" value="C_PKS-NRPS"/>
    <property type="match status" value="1"/>
</dbReference>
<dbReference type="CDD" id="cd00833">
    <property type="entry name" value="PKS"/>
    <property type="match status" value="1"/>
</dbReference>
<dbReference type="FunFam" id="3.40.47.10:FF:000019">
    <property type="entry name" value="Polyketide synthase type I"/>
    <property type="match status" value="1"/>
</dbReference>
<dbReference type="Gene3D" id="3.30.300.30">
    <property type="match status" value="1"/>
</dbReference>
<dbReference type="Gene3D" id="3.40.47.10">
    <property type="match status" value="1"/>
</dbReference>
<dbReference type="Gene3D" id="1.10.1200.10">
    <property type="entry name" value="ACP-like"/>
    <property type="match status" value="2"/>
</dbReference>
<dbReference type="Gene3D" id="3.30.559.10">
    <property type="entry name" value="Chloramphenicol acetyltransferase-like domain"/>
    <property type="match status" value="1"/>
</dbReference>
<dbReference type="Gene3D" id="3.40.366.10">
    <property type="entry name" value="Malonyl-Coenzyme A Acyl Carrier Protein, domain 2"/>
    <property type="match status" value="1"/>
</dbReference>
<dbReference type="Gene3D" id="3.40.50.12780">
    <property type="entry name" value="N-terminal domain of ligase-like"/>
    <property type="match status" value="1"/>
</dbReference>
<dbReference type="Gene3D" id="3.40.50.720">
    <property type="entry name" value="NAD(P)-binding Rossmann-like Domain"/>
    <property type="match status" value="2"/>
</dbReference>
<dbReference type="Gene3D" id="3.30.559.30">
    <property type="entry name" value="Nonribosomal peptide synthetase, condensation domain"/>
    <property type="match status" value="1"/>
</dbReference>
<dbReference type="Gene3D" id="3.10.129.110">
    <property type="entry name" value="Polyketide synthase dehydratase"/>
    <property type="match status" value="1"/>
</dbReference>
<dbReference type="Gene3D" id="3.40.50.150">
    <property type="entry name" value="Vaccinia Virus protein VP39"/>
    <property type="match status" value="1"/>
</dbReference>
<dbReference type="InterPro" id="IPR001227">
    <property type="entry name" value="Ac_transferase_dom_sf"/>
</dbReference>
<dbReference type="InterPro" id="IPR036736">
    <property type="entry name" value="ACP-like_sf"/>
</dbReference>
<dbReference type="InterPro" id="IPR014043">
    <property type="entry name" value="Acyl_transferase_dom"/>
</dbReference>
<dbReference type="InterPro" id="IPR016035">
    <property type="entry name" value="Acyl_Trfase/lysoPLipase"/>
</dbReference>
<dbReference type="InterPro" id="IPR045851">
    <property type="entry name" value="AMP-bd_C_sf"/>
</dbReference>
<dbReference type="InterPro" id="IPR020845">
    <property type="entry name" value="AMP-binding_CS"/>
</dbReference>
<dbReference type="InterPro" id="IPR000873">
    <property type="entry name" value="AMP-dep_synth/lig_dom"/>
</dbReference>
<dbReference type="InterPro" id="IPR042099">
    <property type="entry name" value="ANL_N_sf"/>
</dbReference>
<dbReference type="InterPro" id="IPR023213">
    <property type="entry name" value="CAT-like_dom_sf"/>
</dbReference>
<dbReference type="InterPro" id="IPR001242">
    <property type="entry name" value="Condensatn"/>
</dbReference>
<dbReference type="InterPro" id="IPR013120">
    <property type="entry name" value="Far_NAD-bd"/>
</dbReference>
<dbReference type="InterPro" id="IPR018201">
    <property type="entry name" value="Ketoacyl_synth_AS"/>
</dbReference>
<dbReference type="InterPro" id="IPR014031">
    <property type="entry name" value="Ketoacyl_synth_C"/>
</dbReference>
<dbReference type="InterPro" id="IPR014030">
    <property type="entry name" value="Ketoacyl_synth_N"/>
</dbReference>
<dbReference type="InterPro" id="IPR016036">
    <property type="entry name" value="Malonyl_transacylase_ACP-bd"/>
</dbReference>
<dbReference type="InterPro" id="IPR036291">
    <property type="entry name" value="NAD(P)-bd_dom_sf"/>
</dbReference>
<dbReference type="InterPro" id="IPR032821">
    <property type="entry name" value="PKS_assoc"/>
</dbReference>
<dbReference type="InterPro" id="IPR020841">
    <property type="entry name" value="PKS_Beta-ketoAc_synthase_dom"/>
</dbReference>
<dbReference type="InterPro" id="IPR042104">
    <property type="entry name" value="PKS_dehydratase_sf"/>
</dbReference>
<dbReference type="InterPro" id="IPR020807">
    <property type="entry name" value="PKS_DH"/>
</dbReference>
<dbReference type="InterPro" id="IPR049551">
    <property type="entry name" value="PKS_DH_C"/>
</dbReference>
<dbReference type="InterPro" id="IPR049552">
    <property type="entry name" value="PKS_DH_N"/>
</dbReference>
<dbReference type="InterPro" id="IPR013968">
    <property type="entry name" value="PKS_KR"/>
</dbReference>
<dbReference type="InterPro" id="IPR049900">
    <property type="entry name" value="PKS_mFAS_DH"/>
</dbReference>
<dbReference type="InterPro" id="IPR050091">
    <property type="entry name" value="PKS_NRPS_Biosynth_Enz"/>
</dbReference>
<dbReference type="InterPro" id="IPR020806">
    <property type="entry name" value="PKS_PP-bd"/>
</dbReference>
<dbReference type="InterPro" id="IPR009081">
    <property type="entry name" value="PP-bd_ACP"/>
</dbReference>
<dbReference type="InterPro" id="IPR029063">
    <property type="entry name" value="SAM-dependent_MTases_sf"/>
</dbReference>
<dbReference type="InterPro" id="IPR016039">
    <property type="entry name" value="Thiolase-like"/>
</dbReference>
<dbReference type="PANTHER" id="PTHR43775">
    <property type="entry name" value="FATTY ACID SYNTHASE"/>
    <property type="match status" value="1"/>
</dbReference>
<dbReference type="PANTHER" id="PTHR43775:SF37">
    <property type="entry name" value="SI:DKEY-61P9.11"/>
    <property type="match status" value="1"/>
</dbReference>
<dbReference type="Pfam" id="PF00698">
    <property type="entry name" value="Acyl_transf_1"/>
    <property type="match status" value="1"/>
</dbReference>
<dbReference type="Pfam" id="PF00501">
    <property type="entry name" value="AMP-binding"/>
    <property type="match status" value="1"/>
</dbReference>
<dbReference type="Pfam" id="PF00668">
    <property type="entry name" value="Condensation"/>
    <property type="match status" value="1"/>
</dbReference>
<dbReference type="Pfam" id="PF16197">
    <property type="entry name" value="KAsynt_C_assoc"/>
    <property type="match status" value="1"/>
</dbReference>
<dbReference type="Pfam" id="PF00109">
    <property type="entry name" value="ketoacyl-synt"/>
    <property type="match status" value="1"/>
</dbReference>
<dbReference type="Pfam" id="PF02801">
    <property type="entry name" value="Ketoacyl-synt_C"/>
    <property type="match status" value="1"/>
</dbReference>
<dbReference type="Pfam" id="PF08659">
    <property type="entry name" value="KR"/>
    <property type="match status" value="1"/>
</dbReference>
<dbReference type="Pfam" id="PF07993">
    <property type="entry name" value="NAD_binding_4"/>
    <property type="match status" value="1"/>
</dbReference>
<dbReference type="Pfam" id="PF21089">
    <property type="entry name" value="PKS_DH_N"/>
    <property type="match status" value="1"/>
</dbReference>
<dbReference type="Pfam" id="PF00550">
    <property type="entry name" value="PP-binding"/>
    <property type="match status" value="2"/>
</dbReference>
<dbReference type="Pfam" id="PF14765">
    <property type="entry name" value="PS-DH"/>
    <property type="match status" value="1"/>
</dbReference>
<dbReference type="SMART" id="SM00827">
    <property type="entry name" value="PKS_AT"/>
    <property type="match status" value="1"/>
</dbReference>
<dbReference type="SMART" id="SM00826">
    <property type="entry name" value="PKS_DH"/>
    <property type="match status" value="1"/>
</dbReference>
<dbReference type="SMART" id="SM00822">
    <property type="entry name" value="PKS_KR"/>
    <property type="match status" value="1"/>
</dbReference>
<dbReference type="SMART" id="SM00825">
    <property type="entry name" value="PKS_KS"/>
    <property type="match status" value="1"/>
</dbReference>
<dbReference type="SMART" id="SM00823">
    <property type="entry name" value="PKS_PP"/>
    <property type="match status" value="2"/>
</dbReference>
<dbReference type="SUPFAM" id="SSF56801">
    <property type="entry name" value="Acetyl-CoA synthetase-like"/>
    <property type="match status" value="1"/>
</dbReference>
<dbReference type="SUPFAM" id="SSF47336">
    <property type="entry name" value="ACP-like"/>
    <property type="match status" value="2"/>
</dbReference>
<dbReference type="SUPFAM" id="SSF52777">
    <property type="entry name" value="CoA-dependent acyltransferases"/>
    <property type="match status" value="2"/>
</dbReference>
<dbReference type="SUPFAM" id="SSF52151">
    <property type="entry name" value="FabD/lysophospholipase-like"/>
    <property type="match status" value="1"/>
</dbReference>
<dbReference type="SUPFAM" id="SSF51735">
    <property type="entry name" value="NAD(P)-binding Rossmann-fold domains"/>
    <property type="match status" value="2"/>
</dbReference>
<dbReference type="SUPFAM" id="SSF55048">
    <property type="entry name" value="Probable ACP-binding domain of malonyl-CoA ACP transacylase"/>
    <property type="match status" value="1"/>
</dbReference>
<dbReference type="SUPFAM" id="SSF53335">
    <property type="entry name" value="S-adenosyl-L-methionine-dependent methyltransferases"/>
    <property type="match status" value="1"/>
</dbReference>
<dbReference type="SUPFAM" id="SSF53901">
    <property type="entry name" value="Thiolase-like"/>
    <property type="match status" value="1"/>
</dbReference>
<dbReference type="PROSITE" id="PS00455">
    <property type="entry name" value="AMP_BINDING"/>
    <property type="match status" value="1"/>
</dbReference>
<dbReference type="PROSITE" id="PS50075">
    <property type="entry name" value="CARRIER"/>
    <property type="match status" value="1"/>
</dbReference>
<dbReference type="PROSITE" id="PS00606">
    <property type="entry name" value="KS3_1"/>
    <property type="match status" value="1"/>
</dbReference>
<dbReference type="PROSITE" id="PS52004">
    <property type="entry name" value="KS3_2"/>
    <property type="match status" value="1"/>
</dbReference>
<dbReference type="PROSITE" id="PS52019">
    <property type="entry name" value="PKS_MFAS_DH"/>
    <property type="match status" value="1"/>
</dbReference>
<feature type="chain" id="PRO_0000445385" description="Cyclo-acetoacetyl-L-tryptophan synthase">
    <location>
        <begin position="1"/>
        <end position="3907"/>
    </location>
</feature>
<feature type="domain" description="Ketosynthase family 3 (KS3)" evidence="3 13">
    <location>
        <begin position="2"/>
        <end position="436"/>
    </location>
</feature>
<feature type="domain" description="PKS/mFAS DH" evidence="4">
    <location>
        <begin position="937"/>
        <end position="1239"/>
    </location>
</feature>
<feature type="domain" description="Carrier 1" evidence="2 13">
    <location>
        <begin position="2356"/>
        <end position="2430"/>
    </location>
</feature>
<feature type="domain" description="Carrier 2" evidence="2 13">
    <location>
        <begin position="3474"/>
        <end position="3549"/>
    </location>
</feature>
<feature type="region of interest" description="Malonyl-CoA:ACP transacylase (MAT) domain" evidence="1 13">
    <location>
        <begin position="555"/>
        <end position="870"/>
    </location>
</feature>
<feature type="region of interest" description="Dehydratase (DH) domain" evidence="1 13">
    <location>
        <begin position="937"/>
        <end position="1236"/>
    </location>
</feature>
<feature type="region of interest" description="N-terminal hotdog fold" evidence="4">
    <location>
        <begin position="937"/>
        <end position="1074"/>
    </location>
</feature>
<feature type="region of interest" description="C-terminal hotdog fold" evidence="4">
    <location>
        <begin position="1092"/>
        <end position="1239"/>
    </location>
</feature>
<feature type="region of interest" description="Methyltransferase (MT) domain" evidence="1 13">
    <location>
        <begin position="1386"/>
        <end position="1573"/>
    </location>
</feature>
<feature type="region of interest" description="Ketoreductase (KR)domain" evidence="1 13">
    <location>
        <begin position="2064"/>
        <end position="2238"/>
    </location>
</feature>
<feature type="region of interest" description="Disordered" evidence="5">
    <location>
        <begin position="2324"/>
        <end position="2352"/>
    </location>
</feature>
<feature type="region of interest" description="Condensation" evidence="1 13">
    <location>
        <begin position="2504"/>
        <end position="2926"/>
    </location>
</feature>
<feature type="region of interest" description="Adenylation" evidence="1 13">
    <location>
        <begin position="2959"/>
        <end position="3359"/>
    </location>
</feature>
<feature type="region of interest" description="Reductase (RED) domain" evidence="1 13">
    <location>
        <begin position="3594"/>
        <end position="3813"/>
    </location>
</feature>
<feature type="active site" description="For beta-ketoacyl synthase activity" evidence="3">
    <location>
        <position position="176"/>
    </location>
</feature>
<feature type="active site" description="For beta-ketoacyl synthase activity" evidence="3">
    <location>
        <position position="313"/>
    </location>
</feature>
<feature type="active site" description="For beta-ketoacyl synthase activity" evidence="3">
    <location>
        <position position="356"/>
    </location>
</feature>
<feature type="modified residue" description="O-(pantetheine 4'-phosphoryl)serine" evidence="2">
    <location>
        <position position="2390"/>
    </location>
</feature>
<feature type="modified residue" description="O-(pantetheine 4'-phosphoryl)serine" evidence="2">
    <location>
        <position position="3509"/>
    </location>
</feature>
<name>CPAS_ASPOZ</name>
<accession>B6F209</accession>
<evidence type="ECO:0000255" key="1"/>
<evidence type="ECO:0000255" key="2">
    <source>
        <dbReference type="PROSITE-ProRule" id="PRU00258"/>
    </source>
</evidence>
<evidence type="ECO:0000255" key="3">
    <source>
        <dbReference type="PROSITE-ProRule" id="PRU01348"/>
    </source>
</evidence>
<evidence type="ECO:0000255" key="4">
    <source>
        <dbReference type="PROSITE-ProRule" id="PRU01363"/>
    </source>
</evidence>
<evidence type="ECO:0000256" key="5">
    <source>
        <dbReference type="SAM" id="MobiDB-lite"/>
    </source>
</evidence>
<evidence type="ECO:0000269" key="6">
    <source>
    </source>
</evidence>
<evidence type="ECO:0000269" key="7">
    <source>
    </source>
</evidence>
<evidence type="ECO:0000269" key="8">
    <source>
    </source>
</evidence>
<evidence type="ECO:0000269" key="9">
    <source>
    </source>
</evidence>
<evidence type="ECO:0000303" key="10">
    <source>
    </source>
</evidence>
<evidence type="ECO:0000303" key="11">
    <source>
    </source>
</evidence>
<evidence type="ECO:0000305" key="12"/>
<evidence type="ECO:0000305" key="13">
    <source>
    </source>
</evidence>
<proteinExistence type="evidence at protein level"/>
<reference key="1">
    <citation type="journal article" date="2008" name="Fungal Genet. Biol.">
        <title>Identification of a novel polyketide synthase-nonribosomal peptide synthetase (PKS-NRPS) gene required for the biosynthesis of cyclopiazonic acid in Aspergillus oryzae.</title>
        <authorList>
            <person name="Tokuoka M."/>
            <person name="Seshime Y."/>
            <person name="Fujii I."/>
            <person name="Kitamoto K."/>
            <person name="Takahashi T."/>
            <person name="Koyama Y."/>
        </authorList>
    </citation>
    <scope>NUCLEOTIDE SEQUENCE [GENOMIC DNA]</scope>
    <scope>DISRUPTION PHENOTYPE</scope>
    <scope>FUNCTION</scope>
    <scope>PATHWAY</scope>
    <source>
        <strain>NBRC 4177</strain>
    </source>
</reference>
<reference key="2">
    <citation type="journal article" date="2011" name="ChemBioChem">
        <title>Genetic safeguard against mycotoxin cyclopiazonic acid production in Aspergillus oryzae.</title>
        <authorList>
            <person name="Kato N."/>
            <person name="Tokuoka M."/>
            <person name="Shinohara Y."/>
            <person name="Kawatani M."/>
            <person name="Uramoto M."/>
            <person name="Seshime Y."/>
            <person name="Fujii I."/>
            <person name="Kitamoto K."/>
            <person name="Takahashi T."/>
            <person name="Takahashi S."/>
            <person name="Koyama Y."/>
            <person name="Osada H."/>
        </authorList>
    </citation>
    <scope>NUCLEOTIDE SEQUENCE [GENOMIC DNA]</scope>
    <scope>DISRUPTION PHENOTYPE</scope>
    <scope>FUNCTION</scope>
    <scope>PATHWAY</scope>
    <source>
        <strain>NBRC 4177</strain>
    </source>
</reference>
<reference key="3">
    <citation type="journal article" date="2009" name="Biochemistry">
        <title>Cyclopiazonic acid biosynthesis in Aspergillus sp.: characterization of a reductase-like R* domain in cyclopiazonate synthetase that forms and releases cyclo-acetoacetyl-L-tryptophan.</title>
        <authorList>
            <person name="Liu X."/>
            <person name="Walsh C.T."/>
        </authorList>
    </citation>
    <scope>FUNCTION</scope>
    <scope>CATALYTIC ACTIVITY</scope>
    <scope>DOMAIN</scope>
    <scope>PATHWAY</scope>
</reference>
<reference key="4">
    <citation type="journal article" date="2009" name="Biochemistry">
        <title>Characterization of cyclo-acetoacetyl-L-tryptophan dimethylallyltransferase in cyclopiazonic acid biosynthesis: substrate promiscuity and site directed mutagenesis studies.</title>
        <authorList>
            <person name="Liu X."/>
            <person name="Walsh C.T."/>
        </authorList>
    </citation>
    <scope>FUNCTION</scope>
</reference>
<keyword id="KW-0012">Acyltransferase</keyword>
<keyword id="KW-0413">Isomerase</keyword>
<keyword id="KW-0436">Ligase</keyword>
<keyword id="KW-0489">Methyltransferase</keyword>
<keyword id="KW-0511">Multifunctional enzyme</keyword>
<keyword id="KW-0521">NADP</keyword>
<keyword id="KW-0560">Oxidoreductase</keyword>
<keyword id="KW-0596">Phosphopantetheine</keyword>
<keyword id="KW-0597">Phosphoprotein</keyword>
<keyword id="KW-0677">Repeat</keyword>
<keyword id="KW-0949">S-adenosyl-L-methionine</keyword>
<keyword id="KW-0808">Transferase</keyword>